<name>GREA_STAAT</name>
<sequence>MENQKQYPMTQEGFEKLERELEELKTVKRPEVVEKIKVARSFGDLSENSEYDAAKDEQGFIEQDIQRIEHMLRNALIIEDTGDNNVVKIGKTVTFVELPGDEEESYQIVGSAESDAFNGKISNESPMAKALIGKGLDDEVRVPLPNGGEMNVKIVNIQ</sequence>
<feature type="chain" id="PRO_1000075892" description="Transcription elongation factor GreA">
    <location>
        <begin position="1"/>
        <end position="158"/>
    </location>
</feature>
<feature type="coiled-coil region" evidence="1">
    <location>
        <begin position="4"/>
        <end position="70"/>
    </location>
</feature>
<evidence type="ECO:0000255" key="1">
    <source>
        <dbReference type="HAMAP-Rule" id="MF_00105"/>
    </source>
</evidence>
<proteinExistence type="inferred from homology"/>
<accession>A8Z4E8</accession>
<gene>
    <name evidence="1" type="primary">greA</name>
    <name type="ordered locus">USA300HOU_1610</name>
</gene>
<dbReference type="EMBL" id="CP000730">
    <property type="protein sequence ID" value="ABX29617.1"/>
    <property type="molecule type" value="Genomic_DNA"/>
</dbReference>
<dbReference type="RefSeq" id="WP_000431312.1">
    <property type="nucleotide sequence ID" value="NC_010079.1"/>
</dbReference>
<dbReference type="SMR" id="A8Z4E8"/>
<dbReference type="KEGG" id="sax:USA300HOU_1610"/>
<dbReference type="HOGENOM" id="CLU_101379_2_1_9"/>
<dbReference type="GO" id="GO:0003677">
    <property type="term" value="F:DNA binding"/>
    <property type="evidence" value="ECO:0007669"/>
    <property type="project" value="UniProtKB-UniRule"/>
</dbReference>
<dbReference type="GO" id="GO:0070063">
    <property type="term" value="F:RNA polymerase binding"/>
    <property type="evidence" value="ECO:0007669"/>
    <property type="project" value="InterPro"/>
</dbReference>
<dbReference type="GO" id="GO:0006354">
    <property type="term" value="P:DNA-templated transcription elongation"/>
    <property type="evidence" value="ECO:0007669"/>
    <property type="project" value="TreeGrafter"/>
</dbReference>
<dbReference type="GO" id="GO:0032784">
    <property type="term" value="P:regulation of DNA-templated transcription elongation"/>
    <property type="evidence" value="ECO:0007669"/>
    <property type="project" value="UniProtKB-UniRule"/>
</dbReference>
<dbReference type="FunFam" id="1.10.287.180:FF:000001">
    <property type="entry name" value="Transcription elongation factor GreA"/>
    <property type="match status" value="1"/>
</dbReference>
<dbReference type="FunFam" id="3.10.50.30:FF:000001">
    <property type="entry name" value="Transcription elongation factor GreA"/>
    <property type="match status" value="1"/>
</dbReference>
<dbReference type="Gene3D" id="3.10.50.30">
    <property type="entry name" value="Transcription elongation factor, GreA/GreB, C-terminal domain"/>
    <property type="match status" value="1"/>
</dbReference>
<dbReference type="Gene3D" id="1.10.287.180">
    <property type="entry name" value="Transcription elongation factor, GreA/GreB, N-terminal domain"/>
    <property type="match status" value="1"/>
</dbReference>
<dbReference type="HAMAP" id="MF_00105">
    <property type="entry name" value="GreA_GreB"/>
    <property type="match status" value="1"/>
</dbReference>
<dbReference type="InterPro" id="IPR036953">
    <property type="entry name" value="GreA/GreB_C_sf"/>
</dbReference>
<dbReference type="InterPro" id="IPR018151">
    <property type="entry name" value="TF_GreA/GreB_CS"/>
</dbReference>
<dbReference type="InterPro" id="IPR006359">
    <property type="entry name" value="Tscrpt_elong_fac_GreA"/>
</dbReference>
<dbReference type="InterPro" id="IPR028624">
    <property type="entry name" value="Tscrpt_elong_fac_GreA/B"/>
</dbReference>
<dbReference type="InterPro" id="IPR001437">
    <property type="entry name" value="Tscrpt_elong_fac_GreA/B_C"/>
</dbReference>
<dbReference type="InterPro" id="IPR023459">
    <property type="entry name" value="Tscrpt_elong_fac_GreA/B_fam"/>
</dbReference>
<dbReference type="InterPro" id="IPR022691">
    <property type="entry name" value="Tscrpt_elong_fac_GreA/B_N"/>
</dbReference>
<dbReference type="InterPro" id="IPR036805">
    <property type="entry name" value="Tscrpt_elong_fac_GreA/B_N_sf"/>
</dbReference>
<dbReference type="NCBIfam" id="TIGR01462">
    <property type="entry name" value="greA"/>
    <property type="match status" value="1"/>
</dbReference>
<dbReference type="NCBIfam" id="NF001261">
    <property type="entry name" value="PRK00226.1-2"/>
    <property type="match status" value="1"/>
</dbReference>
<dbReference type="NCBIfam" id="NF001263">
    <property type="entry name" value="PRK00226.1-4"/>
    <property type="match status" value="1"/>
</dbReference>
<dbReference type="PANTHER" id="PTHR30437">
    <property type="entry name" value="TRANSCRIPTION ELONGATION FACTOR GREA"/>
    <property type="match status" value="1"/>
</dbReference>
<dbReference type="PANTHER" id="PTHR30437:SF4">
    <property type="entry name" value="TRANSCRIPTION ELONGATION FACTOR GREA"/>
    <property type="match status" value="1"/>
</dbReference>
<dbReference type="Pfam" id="PF01272">
    <property type="entry name" value="GreA_GreB"/>
    <property type="match status" value="1"/>
</dbReference>
<dbReference type="Pfam" id="PF03449">
    <property type="entry name" value="GreA_GreB_N"/>
    <property type="match status" value="1"/>
</dbReference>
<dbReference type="PIRSF" id="PIRSF006092">
    <property type="entry name" value="GreA_GreB"/>
    <property type="match status" value="1"/>
</dbReference>
<dbReference type="SUPFAM" id="SSF54534">
    <property type="entry name" value="FKBP-like"/>
    <property type="match status" value="1"/>
</dbReference>
<dbReference type="SUPFAM" id="SSF46557">
    <property type="entry name" value="GreA transcript cleavage protein, N-terminal domain"/>
    <property type="match status" value="1"/>
</dbReference>
<dbReference type="PROSITE" id="PS00829">
    <property type="entry name" value="GREAB_1"/>
    <property type="match status" value="1"/>
</dbReference>
<dbReference type="PROSITE" id="PS00830">
    <property type="entry name" value="GREAB_2"/>
    <property type="match status" value="1"/>
</dbReference>
<organism>
    <name type="scientific">Staphylococcus aureus (strain USA300 / TCH1516)</name>
    <dbReference type="NCBI Taxonomy" id="451516"/>
    <lineage>
        <taxon>Bacteria</taxon>
        <taxon>Bacillati</taxon>
        <taxon>Bacillota</taxon>
        <taxon>Bacilli</taxon>
        <taxon>Bacillales</taxon>
        <taxon>Staphylococcaceae</taxon>
        <taxon>Staphylococcus</taxon>
    </lineage>
</organism>
<comment type="function">
    <text evidence="1">Necessary for efficient RNA polymerase transcription elongation past template-encoded arresting sites. The arresting sites in DNA have the property of trapping a certain fraction of elongating RNA polymerases that pass through, resulting in locked ternary complexes. Cleavage of the nascent transcript by cleavage factors such as GreA or GreB allows the resumption of elongation from the new 3'terminus. GreA releases sequences of 2 to 3 nucleotides.</text>
</comment>
<comment type="similarity">
    <text evidence="1">Belongs to the GreA/GreB family.</text>
</comment>
<reference key="1">
    <citation type="journal article" date="2007" name="BMC Microbiol.">
        <title>Subtle genetic changes enhance virulence of methicillin resistant and sensitive Staphylococcus aureus.</title>
        <authorList>
            <person name="Highlander S.K."/>
            <person name="Hulten K.G."/>
            <person name="Qin X."/>
            <person name="Jiang H."/>
            <person name="Yerrapragada S."/>
            <person name="Mason E.O. Jr."/>
            <person name="Shang Y."/>
            <person name="Williams T.M."/>
            <person name="Fortunov R.M."/>
            <person name="Liu Y."/>
            <person name="Igboeli O."/>
            <person name="Petrosino J."/>
            <person name="Tirumalai M."/>
            <person name="Uzman A."/>
            <person name="Fox G.E."/>
            <person name="Cardenas A.M."/>
            <person name="Muzny D.M."/>
            <person name="Hemphill L."/>
            <person name="Ding Y."/>
            <person name="Dugan S."/>
            <person name="Blyth P.R."/>
            <person name="Buhay C.J."/>
            <person name="Dinh H.H."/>
            <person name="Hawes A.C."/>
            <person name="Holder M."/>
            <person name="Kovar C.L."/>
            <person name="Lee S.L."/>
            <person name="Liu W."/>
            <person name="Nazareth L.V."/>
            <person name="Wang Q."/>
            <person name="Zhou J."/>
            <person name="Kaplan S.L."/>
            <person name="Weinstock G.M."/>
        </authorList>
    </citation>
    <scope>NUCLEOTIDE SEQUENCE [LARGE SCALE GENOMIC DNA]</scope>
    <source>
        <strain>USA300 / TCH1516</strain>
    </source>
</reference>
<protein>
    <recommendedName>
        <fullName evidence="1">Transcription elongation factor GreA</fullName>
    </recommendedName>
    <alternativeName>
        <fullName evidence="1">Transcript cleavage factor GreA</fullName>
    </alternativeName>
</protein>
<keyword id="KW-0175">Coiled coil</keyword>
<keyword id="KW-0238">DNA-binding</keyword>
<keyword id="KW-0804">Transcription</keyword>
<keyword id="KW-0805">Transcription regulation</keyword>